<comment type="function">
    <text evidence="1">Bifunctional enzyme that catalyzes the enolization of 2,3-diketo-5-methylthiopentyl-1-phosphate (DK-MTP-1-P) into the intermediate 2-hydroxy-3-keto-5-methylthiopentenyl-1-phosphate (HK-MTPenyl-1-P), which is then dephosphorylated to form the acireductone 1,2-dihydroxy-3-keto-5-methylthiopentene (DHK-MTPene).</text>
</comment>
<comment type="catalytic activity">
    <reaction evidence="1">
        <text>5-methylsulfanyl-2,3-dioxopentyl phosphate + H2O = 1,2-dihydroxy-5-(methylsulfanyl)pent-1-en-3-one + phosphate</text>
        <dbReference type="Rhea" id="RHEA:21700"/>
        <dbReference type="ChEBI" id="CHEBI:15377"/>
        <dbReference type="ChEBI" id="CHEBI:43474"/>
        <dbReference type="ChEBI" id="CHEBI:49252"/>
        <dbReference type="ChEBI" id="CHEBI:58828"/>
        <dbReference type="EC" id="3.1.3.77"/>
    </reaction>
</comment>
<comment type="cofactor">
    <cofactor evidence="1">
        <name>Mg(2+)</name>
        <dbReference type="ChEBI" id="CHEBI:18420"/>
    </cofactor>
    <text evidence="1">Binds 1 Mg(2+) ion per subunit.</text>
</comment>
<comment type="pathway">
    <text evidence="1">Amino-acid biosynthesis; L-methionine biosynthesis via salvage pathway; L-methionine from S-methyl-5-thio-alpha-D-ribose 1-phosphate: step 3/6.</text>
</comment>
<comment type="pathway">
    <text evidence="1">Amino-acid biosynthesis; L-methionine biosynthesis via salvage pathway; L-methionine from S-methyl-5-thio-alpha-D-ribose 1-phosphate: step 4/6.</text>
</comment>
<comment type="subunit">
    <text evidence="1">Monomer.</text>
</comment>
<comment type="similarity">
    <text evidence="1">Belongs to the HAD-like hydrolase superfamily. MasA/MtnC family.</text>
</comment>
<protein>
    <recommendedName>
        <fullName evidence="1">Enolase-phosphatase E1</fullName>
        <ecNumber evidence="1">3.1.3.77</ecNumber>
    </recommendedName>
    <alternativeName>
        <fullName evidence="1">2,3-diketo-5-methylthio-1-phosphopentane phosphatase</fullName>
    </alternativeName>
</protein>
<sequence length="227" mass="24671">MPIKAILTDIEGTTSAVSFVFDVLFPFARAHLPDFVRQHAEQPQVAAQLQAVRTQSAEPDADVERVIAILLEWIAEDRKATPLKALQGMVWEQGYNAGQLKGHVYPDAVDALQHWHQQGYRLFVYSSGSIQAQQLIFGCSEAGDLSGLFSGYFDTTSGPKREAQSYQTIANATGFAAEEILFLSDIVEELDAAKAAGMLTCGLARDGGVLAGHRHVNSFTLIDPASF</sequence>
<dbReference type="EC" id="3.1.3.77" evidence="1"/>
<dbReference type="EMBL" id="AE016853">
    <property type="protein sequence ID" value="AAO55565.1"/>
    <property type="molecule type" value="Genomic_DNA"/>
</dbReference>
<dbReference type="RefSeq" id="NP_791870.1">
    <property type="nucleotide sequence ID" value="NC_004578.1"/>
</dbReference>
<dbReference type="RefSeq" id="WP_005766869.1">
    <property type="nucleotide sequence ID" value="NC_004578.1"/>
</dbReference>
<dbReference type="SMR" id="Q884P1"/>
<dbReference type="STRING" id="223283.PSPTO_2047"/>
<dbReference type="GeneID" id="1183692"/>
<dbReference type="KEGG" id="pst:PSPTO_2047"/>
<dbReference type="PATRIC" id="fig|223283.9.peg.2078"/>
<dbReference type="eggNOG" id="COG4229">
    <property type="taxonomic scope" value="Bacteria"/>
</dbReference>
<dbReference type="HOGENOM" id="CLU_023273_0_0_6"/>
<dbReference type="OrthoDB" id="9797416at2"/>
<dbReference type="PhylomeDB" id="Q884P1"/>
<dbReference type="UniPathway" id="UPA00904">
    <property type="reaction ID" value="UER00876"/>
</dbReference>
<dbReference type="UniPathway" id="UPA00904">
    <property type="reaction ID" value="UER00877"/>
</dbReference>
<dbReference type="Proteomes" id="UP000002515">
    <property type="component" value="Chromosome"/>
</dbReference>
<dbReference type="GO" id="GO:0043715">
    <property type="term" value="F:2,3-diketo-5-methylthiopentyl-1-phosphate enolase activity"/>
    <property type="evidence" value="ECO:0007669"/>
    <property type="project" value="UniProtKB-UniRule"/>
</dbReference>
<dbReference type="GO" id="GO:0043716">
    <property type="term" value="F:2-hydroxy-3-keto-5-methylthiopentenyl-1-phosphate phosphatase activity"/>
    <property type="evidence" value="ECO:0007669"/>
    <property type="project" value="UniProtKB-UniRule"/>
</dbReference>
<dbReference type="GO" id="GO:0043874">
    <property type="term" value="F:acireductone synthase activity"/>
    <property type="evidence" value="ECO:0007669"/>
    <property type="project" value="UniProtKB-EC"/>
</dbReference>
<dbReference type="GO" id="GO:0000287">
    <property type="term" value="F:magnesium ion binding"/>
    <property type="evidence" value="ECO:0007669"/>
    <property type="project" value="UniProtKB-UniRule"/>
</dbReference>
<dbReference type="GO" id="GO:0019509">
    <property type="term" value="P:L-methionine salvage from methylthioadenosine"/>
    <property type="evidence" value="ECO:0007669"/>
    <property type="project" value="UniProtKB-UniRule"/>
</dbReference>
<dbReference type="CDD" id="cd01629">
    <property type="entry name" value="HAD_EP"/>
    <property type="match status" value="1"/>
</dbReference>
<dbReference type="FunFam" id="1.10.720.60:FF:000003">
    <property type="entry name" value="Enolase-phosphatase E1"/>
    <property type="match status" value="1"/>
</dbReference>
<dbReference type="FunFam" id="3.40.50.1000:FF:000079">
    <property type="entry name" value="Enolase-phosphatase E1"/>
    <property type="match status" value="1"/>
</dbReference>
<dbReference type="Gene3D" id="1.10.720.60">
    <property type="match status" value="1"/>
</dbReference>
<dbReference type="Gene3D" id="3.40.50.1000">
    <property type="entry name" value="HAD superfamily/HAD-like"/>
    <property type="match status" value="1"/>
</dbReference>
<dbReference type="HAMAP" id="MF_01681">
    <property type="entry name" value="Salvage_MtnC"/>
    <property type="match status" value="1"/>
</dbReference>
<dbReference type="InterPro" id="IPR023943">
    <property type="entry name" value="Enolase-ppase_E1"/>
</dbReference>
<dbReference type="InterPro" id="IPR036412">
    <property type="entry name" value="HAD-like_sf"/>
</dbReference>
<dbReference type="InterPro" id="IPR006439">
    <property type="entry name" value="HAD-SF_hydro_IA"/>
</dbReference>
<dbReference type="InterPro" id="IPR023214">
    <property type="entry name" value="HAD_sf"/>
</dbReference>
<dbReference type="NCBIfam" id="TIGR01691">
    <property type="entry name" value="enolase-ppase"/>
    <property type="match status" value="1"/>
</dbReference>
<dbReference type="NCBIfam" id="TIGR01549">
    <property type="entry name" value="HAD-SF-IA-v1"/>
    <property type="match status" value="1"/>
</dbReference>
<dbReference type="PANTHER" id="PTHR20371">
    <property type="entry name" value="ENOLASE-PHOSPHATASE E1"/>
    <property type="match status" value="1"/>
</dbReference>
<dbReference type="PANTHER" id="PTHR20371:SF1">
    <property type="entry name" value="ENOLASE-PHOSPHATASE E1"/>
    <property type="match status" value="1"/>
</dbReference>
<dbReference type="Pfam" id="PF00702">
    <property type="entry name" value="Hydrolase"/>
    <property type="match status" value="1"/>
</dbReference>
<dbReference type="SFLD" id="SFLDG01129">
    <property type="entry name" value="C1.5:_HAD__Beta-PGM__Phosphata"/>
    <property type="match status" value="1"/>
</dbReference>
<dbReference type="SFLD" id="SFLDF00044">
    <property type="entry name" value="enolase-phosphatase"/>
    <property type="match status" value="1"/>
</dbReference>
<dbReference type="SUPFAM" id="SSF56784">
    <property type="entry name" value="HAD-like"/>
    <property type="match status" value="1"/>
</dbReference>
<gene>
    <name evidence="1" type="primary">mtnC</name>
    <name type="ordered locus">PSPTO_2047</name>
</gene>
<evidence type="ECO:0000255" key="1">
    <source>
        <dbReference type="HAMAP-Rule" id="MF_01681"/>
    </source>
</evidence>
<organism>
    <name type="scientific">Pseudomonas syringae pv. tomato (strain ATCC BAA-871 / DC3000)</name>
    <dbReference type="NCBI Taxonomy" id="223283"/>
    <lineage>
        <taxon>Bacteria</taxon>
        <taxon>Pseudomonadati</taxon>
        <taxon>Pseudomonadota</taxon>
        <taxon>Gammaproteobacteria</taxon>
        <taxon>Pseudomonadales</taxon>
        <taxon>Pseudomonadaceae</taxon>
        <taxon>Pseudomonas</taxon>
    </lineage>
</organism>
<accession>Q884P1</accession>
<reference key="1">
    <citation type="journal article" date="2003" name="Proc. Natl. Acad. Sci. U.S.A.">
        <title>The complete genome sequence of the Arabidopsis and tomato pathogen Pseudomonas syringae pv. tomato DC3000.</title>
        <authorList>
            <person name="Buell C.R."/>
            <person name="Joardar V."/>
            <person name="Lindeberg M."/>
            <person name="Selengut J."/>
            <person name="Paulsen I.T."/>
            <person name="Gwinn M.L."/>
            <person name="Dodson R.J."/>
            <person name="DeBoy R.T."/>
            <person name="Durkin A.S."/>
            <person name="Kolonay J.F."/>
            <person name="Madupu R."/>
            <person name="Daugherty S.C."/>
            <person name="Brinkac L.M."/>
            <person name="Beanan M.J."/>
            <person name="Haft D.H."/>
            <person name="Nelson W.C."/>
            <person name="Davidsen T.M."/>
            <person name="Zafar N."/>
            <person name="Zhou L."/>
            <person name="Liu J."/>
            <person name="Yuan Q."/>
            <person name="Khouri H.M."/>
            <person name="Fedorova N.B."/>
            <person name="Tran B."/>
            <person name="Russell D."/>
            <person name="Berry K.J."/>
            <person name="Utterback T.R."/>
            <person name="Van Aken S.E."/>
            <person name="Feldblyum T.V."/>
            <person name="D'Ascenzo M."/>
            <person name="Deng W.-L."/>
            <person name="Ramos A.R."/>
            <person name="Alfano J.R."/>
            <person name="Cartinhour S."/>
            <person name="Chatterjee A.K."/>
            <person name="Delaney T.P."/>
            <person name="Lazarowitz S.G."/>
            <person name="Martin G.B."/>
            <person name="Schneider D.J."/>
            <person name="Tang X."/>
            <person name="Bender C.L."/>
            <person name="White O."/>
            <person name="Fraser C.M."/>
            <person name="Collmer A."/>
        </authorList>
    </citation>
    <scope>NUCLEOTIDE SEQUENCE [LARGE SCALE GENOMIC DNA]</scope>
    <source>
        <strain>ATCC BAA-871 / DC3000</strain>
    </source>
</reference>
<feature type="chain" id="PRO_0000357393" description="Enolase-phosphatase E1">
    <location>
        <begin position="1"/>
        <end position="227"/>
    </location>
</feature>
<name>MTNC_PSESM</name>
<proteinExistence type="inferred from homology"/>
<keyword id="KW-0028">Amino-acid biosynthesis</keyword>
<keyword id="KW-0378">Hydrolase</keyword>
<keyword id="KW-0460">Magnesium</keyword>
<keyword id="KW-0479">Metal-binding</keyword>
<keyword id="KW-0486">Methionine biosynthesis</keyword>
<keyword id="KW-1185">Reference proteome</keyword>